<evidence type="ECO:0000250" key="1">
    <source>
        <dbReference type="UniProtKB" id="Q53T59"/>
    </source>
</evidence>
<evidence type="ECO:0000255" key="2">
    <source>
        <dbReference type="PROSITE-ProRule" id="PRU00147"/>
    </source>
</evidence>
<evidence type="ECO:0000256" key="3">
    <source>
        <dbReference type="SAM" id="MobiDB-lite"/>
    </source>
</evidence>
<evidence type="ECO:0000269" key="4">
    <source>
    </source>
</evidence>
<evidence type="ECO:0000305" key="5"/>
<feature type="chain" id="PRO_0000313803" description="HCLS1-binding protein 3">
    <location>
        <begin position="1"/>
        <end position="395"/>
    </location>
</feature>
<feature type="domain" description="PX" evidence="2">
    <location>
        <begin position="19"/>
        <end position="142"/>
    </location>
</feature>
<feature type="region of interest" description="Disordered" evidence="3">
    <location>
        <begin position="143"/>
        <end position="310"/>
    </location>
</feature>
<feature type="region of interest" description="Disordered" evidence="3">
    <location>
        <begin position="322"/>
        <end position="374"/>
    </location>
</feature>
<feature type="compositionally biased region" description="Acidic residues" evidence="3">
    <location>
        <begin position="162"/>
        <end position="174"/>
    </location>
</feature>
<feature type="compositionally biased region" description="Acidic residues" evidence="3">
    <location>
        <begin position="194"/>
        <end position="206"/>
    </location>
</feature>
<feature type="compositionally biased region" description="Basic and acidic residues" evidence="3">
    <location>
        <begin position="249"/>
        <end position="260"/>
    </location>
</feature>
<feature type="compositionally biased region" description="Basic and acidic residues" evidence="3">
    <location>
        <begin position="299"/>
        <end position="310"/>
    </location>
</feature>
<feature type="compositionally biased region" description="Pro residues" evidence="3">
    <location>
        <begin position="329"/>
        <end position="339"/>
    </location>
</feature>
<feature type="modified residue" description="N-acetylmethionine" evidence="1">
    <location>
        <position position="1"/>
    </location>
</feature>
<feature type="modified residue" description="Phosphoserine" evidence="1">
    <location>
        <position position="3"/>
    </location>
</feature>
<feature type="modified residue" description="Phosphoserine" evidence="1">
    <location>
        <position position="191"/>
    </location>
</feature>
<feature type="modified residue" description="Phosphoserine" evidence="1">
    <location>
        <position position="254"/>
    </location>
</feature>
<feature type="modified residue" description="N6-acetyllysine" evidence="1">
    <location>
        <position position="341"/>
    </location>
</feature>
<feature type="sequence conflict" description="In Ref. 2; BAE42064." evidence="5" ref="2">
    <original>R</original>
    <variation>S</variation>
    <location>
        <position position="299"/>
    </location>
</feature>
<feature type="sequence conflict" description="In Ref. 1; CAA10600." evidence="5" ref="1">
    <original>PSLF</original>
    <variation>SGFQC</variation>
    <location>
        <begin position="392"/>
        <end position="395"/>
    </location>
</feature>
<name>H1BP3_MOUSE</name>
<keyword id="KW-0007">Acetylation</keyword>
<keyword id="KW-0597">Phosphoprotein</keyword>
<keyword id="KW-1185">Reference proteome</keyword>
<proteinExistence type="evidence at protein level"/>
<reference key="1">
    <citation type="journal article" date="1999" name="Int. Immunol.">
        <title>Isolation and characterization of a novel HS1 SH3 domain binding protein, HS1BP3.</title>
        <authorList>
            <person name="Takemoto Y."/>
            <person name="Furuta M."/>
            <person name="Sato M."/>
            <person name="Kubo M."/>
            <person name="Hashimoto Y."/>
        </authorList>
    </citation>
    <scope>NUCLEOTIDE SEQUENCE [MRNA]</scope>
    <scope>INTERACTION WITH HCLS1</scope>
    <scope>POSSIBLE FUNCTION</scope>
    <scope>TISSUE SPECIFICITY</scope>
    <source>
        <strain>BALB/cJ</strain>
        <tissue>Lymphocyte</tissue>
    </source>
</reference>
<reference key="2">
    <citation type="journal article" date="2005" name="Science">
        <title>The transcriptional landscape of the mammalian genome.</title>
        <authorList>
            <person name="Carninci P."/>
            <person name="Kasukawa T."/>
            <person name="Katayama S."/>
            <person name="Gough J."/>
            <person name="Frith M.C."/>
            <person name="Maeda N."/>
            <person name="Oyama R."/>
            <person name="Ravasi T."/>
            <person name="Lenhard B."/>
            <person name="Wells C."/>
            <person name="Kodzius R."/>
            <person name="Shimokawa K."/>
            <person name="Bajic V.B."/>
            <person name="Brenner S.E."/>
            <person name="Batalov S."/>
            <person name="Forrest A.R."/>
            <person name="Zavolan M."/>
            <person name="Davis M.J."/>
            <person name="Wilming L.G."/>
            <person name="Aidinis V."/>
            <person name="Allen J.E."/>
            <person name="Ambesi-Impiombato A."/>
            <person name="Apweiler R."/>
            <person name="Aturaliya R.N."/>
            <person name="Bailey T.L."/>
            <person name="Bansal M."/>
            <person name="Baxter L."/>
            <person name="Beisel K.W."/>
            <person name="Bersano T."/>
            <person name="Bono H."/>
            <person name="Chalk A.M."/>
            <person name="Chiu K.P."/>
            <person name="Choudhary V."/>
            <person name="Christoffels A."/>
            <person name="Clutterbuck D.R."/>
            <person name="Crowe M.L."/>
            <person name="Dalla E."/>
            <person name="Dalrymple B.P."/>
            <person name="de Bono B."/>
            <person name="Della Gatta G."/>
            <person name="di Bernardo D."/>
            <person name="Down T."/>
            <person name="Engstrom P."/>
            <person name="Fagiolini M."/>
            <person name="Faulkner G."/>
            <person name="Fletcher C.F."/>
            <person name="Fukushima T."/>
            <person name="Furuno M."/>
            <person name="Futaki S."/>
            <person name="Gariboldi M."/>
            <person name="Georgii-Hemming P."/>
            <person name="Gingeras T.R."/>
            <person name="Gojobori T."/>
            <person name="Green R.E."/>
            <person name="Gustincich S."/>
            <person name="Harbers M."/>
            <person name="Hayashi Y."/>
            <person name="Hensch T.K."/>
            <person name="Hirokawa N."/>
            <person name="Hill D."/>
            <person name="Huminiecki L."/>
            <person name="Iacono M."/>
            <person name="Ikeo K."/>
            <person name="Iwama A."/>
            <person name="Ishikawa T."/>
            <person name="Jakt M."/>
            <person name="Kanapin A."/>
            <person name="Katoh M."/>
            <person name="Kawasawa Y."/>
            <person name="Kelso J."/>
            <person name="Kitamura H."/>
            <person name="Kitano H."/>
            <person name="Kollias G."/>
            <person name="Krishnan S.P."/>
            <person name="Kruger A."/>
            <person name="Kummerfeld S.K."/>
            <person name="Kurochkin I.V."/>
            <person name="Lareau L.F."/>
            <person name="Lazarevic D."/>
            <person name="Lipovich L."/>
            <person name="Liu J."/>
            <person name="Liuni S."/>
            <person name="McWilliam S."/>
            <person name="Madan Babu M."/>
            <person name="Madera M."/>
            <person name="Marchionni L."/>
            <person name="Matsuda H."/>
            <person name="Matsuzawa S."/>
            <person name="Miki H."/>
            <person name="Mignone F."/>
            <person name="Miyake S."/>
            <person name="Morris K."/>
            <person name="Mottagui-Tabar S."/>
            <person name="Mulder N."/>
            <person name="Nakano N."/>
            <person name="Nakauchi H."/>
            <person name="Ng P."/>
            <person name="Nilsson R."/>
            <person name="Nishiguchi S."/>
            <person name="Nishikawa S."/>
            <person name="Nori F."/>
            <person name="Ohara O."/>
            <person name="Okazaki Y."/>
            <person name="Orlando V."/>
            <person name="Pang K.C."/>
            <person name="Pavan W.J."/>
            <person name="Pavesi G."/>
            <person name="Pesole G."/>
            <person name="Petrovsky N."/>
            <person name="Piazza S."/>
            <person name="Reed J."/>
            <person name="Reid J.F."/>
            <person name="Ring B.Z."/>
            <person name="Ringwald M."/>
            <person name="Rost B."/>
            <person name="Ruan Y."/>
            <person name="Salzberg S.L."/>
            <person name="Sandelin A."/>
            <person name="Schneider C."/>
            <person name="Schoenbach C."/>
            <person name="Sekiguchi K."/>
            <person name="Semple C.A."/>
            <person name="Seno S."/>
            <person name="Sessa L."/>
            <person name="Sheng Y."/>
            <person name="Shibata Y."/>
            <person name="Shimada H."/>
            <person name="Shimada K."/>
            <person name="Silva D."/>
            <person name="Sinclair B."/>
            <person name="Sperling S."/>
            <person name="Stupka E."/>
            <person name="Sugiura K."/>
            <person name="Sultana R."/>
            <person name="Takenaka Y."/>
            <person name="Taki K."/>
            <person name="Tammoja K."/>
            <person name="Tan S.L."/>
            <person name="Tang S."/>
            <person name="Taylor M.S."/>
            <person name="Tegner J."/>
            <person name="Teichmann S.A."/>
            <person name="Ueda H.R."/>
            <person name="van Nimwegen E."/>
            <person name="Verardo R."/>
            <person name="Wei C.L."/>
            <person name="Yagi K."/>
            <person name="Yamanishi H."/>
            <person name="Zabarovsky E."/>
            <person name="Zhu S."/>
            <person name="Zimmer A."/>
            <person name="Hide W."/>
            <person name="Bult C."/>
            <person name="Grimmond S.M."/>
            <person name="Teasdale R.D."/>
            <person name="Liu E.T."/>
            <person name="Brusic V."/>
            <person name="Quackenbush J."/>
            <person name="Wahlestedt C."/>
            <person name="Mattick J.S."/>
            <person name="Hume D.A."/>
            <person name="Kai C."/>
            <person name="Sasaki D."/>
            <person name="Tomaru Y."/>
            <person name="Fukuda S."/>
            <person name="Kanamori-Katayama M."/>
            <person name="Suzuki M."/>
            <person name="Aoki J."/>
            <person name="Arakawa T."/>
            <person name="Iida J."/>
            <person name="Imamura K."/>
            <person name="Itoh M."/>
            <person name="Kato T."/>
            <person name="Kawaji H."/>
            <person name="Kawagashira N."/>
            <person name="Kawashima T."/>
            <person name="Kojima M."/>
            <person name="Kondo S."/>
            <person name="Konno H."/>
            <person name="Nakano K."/>
            <person name="Ninomiya N."/>
            <person name="Nishio T."/>
            <person name="Okada M."/>
            <person name="Plessy C."/>
            <person name="Shibata K."/>
            <person name="Shiraki T."/>
            <person name="Suzuki S."/>
            <person name="Tagami M."/>
            <person name="Waki K."/>
            <person name="Watahiki A."/>
            <person name="Okamura-Oho Y."/>
            <person name="Suzuki H."/>
            <person name="Kawai J."/>
            <person name="Hayashizaki Y."/>
        </authorList>
    </citation>
    <scope>NUCLEOTIDE SEQUENCE [LARGE SCALE MRNA]</scope>
    <source>
        <strain>NOD</strain>
    </source>
</reference>
<reference key="3">
    <citation type="journal article" date="2009" name="PLoS Biol.">
        <title>Lineage-specific biology revealed by a finished genome assembly of the mouse.</title>
        <authorList>
            <person name="Church D.M."/>
            <person name="Goodstadt L."/>
            <person name="Hillier L.W."/>
            <person name="Zody M.C."/>
            <person name="Goldstein S."/>
            <person name="She X."/>
            <person name="Bult C.J."/>
            <person name="Agarwala R."/>
            <person name="Cherry J.L."/>
            <person name="DiCuccio M."/>
            <person name="Hlavina W."/>
            <person name="Kapustin Y."/>
            <person name="Meric P."/>
            <person name="Maglott D."/>
            <person name="Birtle Z."/>
            <person name="Marques A.C."/>
            <person name="Graves T."/>
            <person name="Zhou S."/>
            <person name="Teague B."/>
            <person name="Potamousis K."/>
            <person name="Churas C."/>
            <person name="Place M."/>
            <person name="Herschleb J."/>
            <person name="Runnheim R."/>
            <person name="Forrest D."/>
            <person name="Amos-Landgraf J."/>
            <person name="Schwartz D.C."/>
            <person name="Cheng Z."/>
            <person name="Lindblad-Toh K."/>
            <person name="Eichler E.E."/>
            <person name="Ponting C.P."/>
        </authorList>
    </citation>
    <scope>NUCLEOTIDE SEQUENCE [LARGE SCALE GENOMIC DNA]</scope>
    <source>
        <strain>C57BL/6J</strain>
    </source>
</reference>
<reference key="4">
    <citation type="journal article" date="2010" name="Cell">
        <title>A tissue-specific atlas of mouse protein phosphorylation and expression.</title>
        <authorList>
            <person name="Huttlin E.L."/>
            <person name="Jedrychowski M.P."/>
            <person name="Elias J.E."/>
            <person name="Goswami T."/>
            <person name="Rad R."/>
            <person name="Beausoleil S.A."/>
            <person name="Villen J."/>
            <person name="Haas W."/>
            <person name="Sowa M.E."/>
            <person name="Gygi S.P."/>
        </authorList>
    </citation>
    <scope>IDENTIFICATION BY MASS SPECTROMETRY [LARGE SCALE ANALYSIS]</scope>
    <source>
        <tissue>Brain</tissue>
        <tissue>Heart</tissue>
        <tissue>Lung</tissue>
        <tissue>Pancreas</tissue>
        <tissue>Spleen</tissue>
    </source>
</reference>
<accession>Q3TC93</accession>
<accession>E9QLQ4</accession>
<accession>Q9Z1K1</accession>
<protein>
    <recommendedName>
        <fullName>HCLS1-binding protein 3</fullName>
    </recommendedName>
    <alternativeName>
        <fullName>HS1-binding protein 3</fullName>
        <shortName>HSP1BP-3</shortName>
    </alternativeName>
</protein>
<sequence length="395" mass="43691">MQSPAVLRTSRQVQNAHTGLDLSVPQHQEVRGKMMSGHVEYQILVVTRLAVFKSAKHRPEDVVQFLVSKKYSEIEEFYQKLYSCYPAASLPPLPRKVLFVGESDIRERRAMFDEILRCVSKDAQLAGSPELLEFLGTRAPGATGLATRDPSVLDDTASQPGDSDEAFDFFEQQDEVQPPTLGLSSKDVEKSLVGEEEEEEEEEEVLDPLGIMRSKKPKKRPEVAVRPKPAPRLTIFDEEVDPDAGLFSSDKKVSETRRPLETTQDSLKLFDDPDLGGAVSLGDPLLLPAASESRGPTSRPEHGDASKELFRVEEDLDLILNLGSEPKPKPQTKPKPLVPAKPALPRKPTLPASVGPSEPGSGPQKQQQIQAMDEMDILQYIRDHDTLAQDSPSLF</sequence>
<gene>
    <name type="primary">Hs1bp3</name>
</gene>
<organism>
    <name type="scientific">Mus musculus</name>
    <name type="common">Mouse</name>
    <dbReference type="NCBI Taxonomy" id="10090"/>
    <lineage>
        <taxon>Eukaryota</taxon>
        <taxon>Metazoa</taxon>
        <taxon>Chordata</taxon>
        <taxon>Craniata</taxon>
        <taxon>Vertebrata</taxon>
        <taxon>Euteleostomi</taxon>
        <taxon>Mammalia</taxon>
        <taxon>Eutheria</taxon>
        <taxon>Euarchontoglires</taxon>
        <taxon>Glires</taxon>
        <taxon>Rodentia</taxon>
        <taxon>Myomorpha</taxon>
        <taxon>Muroidea</taxon>
        <taxon>Muridae</taxon>
        <taxon>Murinae</taxon>
        <taxon>Mus</taxon>
        <taxon>Mus</taxon>
    </lineage>
</organism>
<dbReference type="EMBL" id="AJ132192">
    <property type="protein sequence ID" value="CAA10600.1"/>
    <property type="molecule type" value="mRNA"/>
</dbReference>
<dbReference type="EMBL" id="AK170838">
    <property type="protein sequence ID" value="BAE42064.1"/>
    <property type="molecule type" value="mRNA"/>
</dbReference>
<dbReference type="EMBL" id="AC122860">
    <property type="status" value="NOT_ANNOTATED_CDS"/>
    <property type="molecule type" value="Genomic_DNA"/>
</dbReference>
<dbReference type="CCDS" id="CCDS49024.1"/>
<dbReference type="RefSeq" id="NP_067404.2">
    <property type="nucleotide sequence ID" value="NM_021429.3"/>
</dbReference>
<dbReference type="SMR" id="Q3TC93"/>
<dbReference type="BioGRID" id="208412">
    <property type="interactions" value="2"/>
</dbReference>
<dbReference type="FunCoup" id="Q3TC93">
    <property type="interactions" value="1383"/>
</dbReference>
<dbReference type="MINT" id="Q3TC93"/>
<dbReference type="STRING" id="10090.ENSMUSP00000020927"/>
<dbReference type="iPTMnet" id="Q3TC93"/>
<dbReference type="PhosphoSitePlus" id="Q3TC93"/>
<dbReference type="PaxDb" id="10090-ENSMUSP00000020927"/>
<dbReference type="PeptideAtlas" id="Q3TC93"/>
<dbReference type="ProteomicsDB" id="271374"/>
<dbReference type="Pumba" id="Q3TC93"/>
<dbReference type="Antibodypedia" id="27299">
    <property type="antibodies" value="159 antibodies from 27 providers"/>
</dbReference>
<dbReference type="DNASU" id="58240"/>
<dbReference type="Ensembl" id="ENSMUST00000020927.10">
    <property type="protein sequence ID" value="ENSMUSP00000020927.9"/>
    <property type="gene ID" value="ENSMUSG00000020605.10"/>
</dbReference>
<dbReference type="GeneID" id="58240"/>
<dbReference type="KEGG" id="mmu:58240"/>
<dbReference type="UCSC" id="uc007mzo.2">
    <property type="organism name" value="mouse"/>
</dbReference>
<dbReference type="AGR" id="MGI:1913224"/>
<dbReference type="CTD" id="64342"/>
<dbReference type="MGI" id="MGI:1913224">
    <property type="gene designation" value="Hs1bp3"/>
</dbReference>
<dbReference type="VEuPathDB" id="HostDB:ENSMUSG00000020605"/>
<dbReference type="eggNOG" id="ENOG502QSUW">
    <property type="taxonomic scope" value="Eukaryota"/>
</dbReference>
<dbReference type="GeneTree" id="ENSGT00390000013092"/>
<dbReference type="HOGENOM" id="CLU_057345_1_0_1"/>
<dbReference type="InParanoid" id="Q3TC93"/>
<dbReference type="OMA" id="NRIQTMN"/>
<dbReference type="OrthoDB" id="10254720at2759"/>
<dbReference type="PhylomeDB" id="Q3TC93"/>
<dbReference type="TreeFam" id="TF335484"/>
<dbReference type="BioGRID-ORCS" id="58240">
    <property type="hits" value="2 hits in 77 CRISPR screens"/>
</dbReference>
<dbReference type="ChiTaRS" id="Hs1bp3">
    <property type="organism name" value="mouse"/>
</dbReference>
<dbReference type="PRO" id="PR:Q3TC93"/>
<dbReference type="Proteomes" id="UP000000589">
    <property type="component" value="Chromosome 12"/>
</dbReference>
<dbReference type="RNAct" id="Q3TC93">
    <property type="molecule type" value="protein"/>
</dbReference>
<dbReference type="Bgee" id="ENSMUSG00000020605">
    <property type="expression patterns" value="Expressed in ectoplacental cone and 207 other cell types or tissues"/>
</dbReference>
<dbReference type="ExpressionAtlas" id="Q3TC93">
    <property type="expression patterns" value="baseline and differential"/>
</dbReference>
<dbReference type="GO" id="GO:0005783">
    <property type="term" value="C:endoplasmic reticulum"/>
    <property type="evidence" value="ECO:0007669"/>
    <property type="project" value="Ensembl"/>
</dbReference>
<dbReference type="GO" id="GO:0005739">
    <property type="term" value="C:mitochondrion"/>
    <property type="evidence" value="ECO:0007669"/>
    <property type="project" value="Ensembl"/>
</dbReference>
<dbReference type="GO" id="GO:0035091">
    <property type="term" value="F:phosphatidylinositol binding"/>
    <property type="evidence" value="ECO:0007669"/>
    <property type="project" value="InterPro"/>
</dbReference>
<dbReference type="GO" id="GO:0007166">
    <property type="term" value="P:cell surface receptor signaling pathway"/>
    <property type="evidence" value="ECO:0000304"/>
    <property type="project" value="MGI"/>
</dbReference>
<dbReference type="GO" id="GO:0042981">
    <property type="term" value="P:regulation of apoptotic process"/>
    <property type="evidence" value="ECO:0007669"/>
    <property type="project" value="Ensembl"/>
</dbReference>
<dbReference type="GO" id="GO:0030217">
    <property type="term" value="P:T cell differentiation"/>
    <property type="evidence" value="ECO:0000304"/>
    <property type="project" value="MGI"/>
</dbReference>
<dbReference type="CDD" id="cd06868">
    <property type="entry name" value="PX_HS1BP3"/>
    <property type="match status" value="1"/>
</dbReference>
<dbReference type="FunFam" id="3.30.1520.10:FF:000036">
    <property type="entry name" value="HCLS1 binding protein 3"/>
    <property type="match status" value="1"/>
</dbReference>
<dbReference type="Gene3D" id="3.30.1520.10">
    <property type="entry name" value="Phox-like domain"/>
    <property type="match status" value="1"/>
</dbReference>
<dbReference type="InterPro" id="IPR039701">
    <property type="entry name" value="HS1BP3"/>
</dbReference>
<dbReference type="InterPro" id="IPR037901">
    <property type="entry name" value="HS1BP3_PX"/>
</dbReference>
<dbReference type="InterPro" id="IPR001683">
    <property type="entry name" value="PX_dom"/>
</dbReference>
<dbReference type="InterPro" id="IPR036871">
    <property type="entry name" value="PX_dom_sf"/>
</dbReference>
<dbReference type="PANTHER" id="PTHR14431">
    <property type="entry name" value="HCLS1-BINDING PROTEIN 3"/>
    <property type="match status" value="1"/>
</dbReference>
<dbReference type="PANTHER" id="PTHR14431:SF1">
    <property type="entry name" value="HCLS1-BINDING PROTEIN 3"/>
    <property type="match status" value="1"/>
</dbReference>
<dbReference type="Pfam" id="PF00787">
    <property type="entry name" value="PX"/>
    <property type="match status" value="1"/>
</dbReference>
<dbReference type="SMART" id="SM00312">
    <property type="entry name" value="PX"/>
    <property type="match status" value="1"/>
</dbReference>
<dbReference type="SUPFAM" id="SSF64268">
    <property type="entry name" value="PX domain"/>
    <property type="match status" value="1"/>
</dbReference>
<dbReference type="PROSITE" id="PS50195">
    <property type="entry name" value="PX"/>
    <property type="match status" value="1"/>
</dbReference>
<comment type="function">
    <text>May be a modulator of IL-2 signaling.</text>
</comment>
<comment type="subunit">
    <text evidence="4">Binds HCLS1. Interacts with the SH3 domain of HCLS1 in vitro.</text>
</comment>
<comment type="tissue specificity">
    <text evidence="4">Ubiquitously expressed.</text>
</comment>